<keyword id="KW-0067">ATP-binding</keyword>
<keyword id="KW-0378">Hydrolase</keyword>
<keyword id="KW-0433">Leucine-rich repeat</keyword>
<keyword id="KW-0520">NAD</keyword>
<keyword id="KW-0547">Nucleotide-binding</keyword>
<keyword id="KW-0611">Plant defense</keyword>
<keyword id="KW-1185">Reference proteome</keyword>
<keyword id="KW-0677">Repeat</keyword>
<evidence type="ECO:0000250" key="1">
    <source>
        <dbReference type="UniProtKB" id="F4JNA9"/>
    </source>
</evidence>
<evidence type="ECO:0000250" key="2">
    <source>
        <dbReference type="UniProtKB" id="V9M398"/>
    </source>
</evidence>
<evidence type="ECO:0000255" key="3"/>
<evidence type="ECO:0000255" key="4">
    <source>
        <dbReference type="PROSITE-ProRule" id="PRU00204"/>
    </source>
</evidence>
<evidence type="ECO:0000256" key="5">
    <source>
        <dbReference type="SAM" id="MobiDB-lite"/>
    </source>
</evidence>
<evidence type="ECO:0000269" key="6">
    <source>
    </source>
</evidence>
<evidence type="ECO:0000269" key="7">
    <source>
    </source>
</evidence>
<evidence type="ECO:0000269" key="8">
    <source>
    </source>
</evidence>
<evidence type="ECO:0000305" key="9"/>
<evidence type="ECO:0000305" key="10">
    <source>
    </source>
</evidence>
<evidence type="ECO:0000305" key="11">
    <source>
    </source>
</evidence>
<evidence type="ECO:0000312" key="12">
    <source>
        <dbReference type="Araport" id="AT3G44480"/>
    </source>
</evidence>
<evidence type="ECO:0000312" key="13">
    <source>
        <dbReference type="EMBL" id="CAB88530.1"/>
    </source>
</evidence>
<accession>F4J339</accession>
<accession>Q9LXN9</accession>
<name>RPP1_ARATH</name>
<feature type="chain" id="PRO_0000433378" description="Probable disease resistance protein RPP1">
    <location>
        <begin position="1"/>
        <end position="1194"/>
    </location>
</feature>
<feature type="domain" description="TIR" evidence="4">
    <location>
        <begin position="96"/>
        <end position="260"/>
    </location>
</feature>
<feature type="domain" description="NB-ARC" evidence="3">
    <location>
        <begin position="280"/>
        <end position="535"/>
    </location>
</feature>
<feature type="repeat" description="LRR 1" evidence="3">
    <location>
        <begin position="623"/>
        <end position="647"/>
    </location>
</feature>
<feature type="repeat" description="LRR 2" evidence="3">
    <location>
        <begin position="658"/>
        <end position="681"/>
    </location>
</feature>
<feature type="repeat" description="LRR 3" evidence="3">
    <location>
        <begin position="690"/>
        <end position="713"/>
    </location>
</feature>
<feature type="repeat" description="LRR 4" evidence="3">
    <location>
        <begin position="714"/>
        <end position="737"/>
    </location>
</feature>
<feature type="repeat" description="LRR 5" evidence="3">
    <location>
        <begin position="739"/>
        <end position="760"/>
    </location>
</feature>
<feature type="repeat" description="LRR 6" evidence="3">
    <location>
        <begin position="761"/>
        <end position="784"/>
    </location>
</feature>
<feature type="repeat" description="LRR 7" evidence="3">
    <location>
        <begin position="786"/>
        <end position="807"/>
    </location>
</feature>
<feature type="repeat" description="LRR 8" evidence="3">
    <location>
        <begin position="808"/>
        <end position="831"/>
    </location>
</feature>
<feature type="repeat" description="LRR 9" evidence="3">
    <location>
        <begin position="832"/>
        <end position="855"/>
    </location>
</feature>
<feature type="repeat" description="LRR 10" evidence="3">
    <location>
        <begin position="866"/>
        <end position="878"/>
    </location>
</feature>
<feature type="repeat" description="LRR 11" evidence="3">
    <location>
        <begin position="879"/>
        <end position="899"/>
    </location>
</feature>
<feature type="repeat" description="LRR 12" evidence="3">
    <location>
        <begin position="900"/>
        <end position="922"/>
    </location>
</feature>
<feature type="repeat" description="LRR 13" evidence="3">
    <location>
        <begin position="943"/>
        <end position="965"/>
    </location>
</feature>
<feature type="repeat" description="LRR 14" evidence="3">
    <location>
        <begin position="966"/>
        <end position="991"/>
    </location>
</feature>
<feature type="region of interest" description="Disordered" evidence="5">
    <location>
        <begin position="1"/>
        <end position="27"/>
    </location>
</feature>
<feature type="region of interest" description="Disordered" evidence="5">
    <location>
        <begin position="1170"/>
        <end position="1194"/>
    </location>
</feature>
<feature type="compositionally biased region" description="Low complexity" evidence="5">
    <location>
        <begin position="1171"/>
        <end position="1185"/>
    </location>
</feature>
<feature type="active site" evidence="4">
    <location>
        <position position="171"/>
    </location>
</feature>
<feature type="binding site" evidence="2">
    <location>
        <begin position="105"/>
        <end position="110"/>
    </location>
    <ligand>
        <name>NAD(+)</name>
        <dbReference type="ChEBI" id="CHEBI:57540"/>
    </ligand>
</feature>
<proteinExistence type="evidence at protein level"/>
<dbReference type="EC" id="3.2.2.6" evidence="10 11"/>
<dbReference type="EMBL" id="AL353818">
    <property type="protein sequence ID" value="CAB88530.1"/>
    <property type="status" value="ALT_SEQ"/>
    <property type="molecule type" value="Genomic_DNA"/>
</dbReference>
<dbReference type="EMBL" id="CP002686">
    <property type="protein sequence ID" value="AEE77906.1"/>
    <property type="molecule type" value="Genomic_DNA"/>
</dbReference>
<dbReference type="EMBL" id="CP002686">
    <property type="protein sequence ID" value="ANM64388.1"/>
    <property type="molecule type" value="Genomic_DNA"/>
</dbReference>
<dbReference type="PIR" id="T48928">
    <property type="entry name" value="T48928"/>
</dbReference>
<dbReference type="RefSeq" id="NP_001326419.1">
    <property type="nucleotide sequence ID" value="NM_001339143.1"/>
</dbReference>
<dbReference type="RefSeq" id="NP_190034.2">
    <property type="nucleotide sequence ID" value="NM_114316.3"/>
</dbReference>
<dbReference type="SMR" id="F4J339"/>
<dbReference type="FunCoup" id="F4J339">
    <property type="interactions" value="5"/>
</dbReference>
<dbReference type="STRING" id="3702.F4J339"/>
<dbReference type="iPTMnet" id="F4J339"/>
<dbReference type="PaxDb" id="3702-AT3G44480.1"/>
<dbReference type="ProteomicsDB" id="226511"/>
<dbReference type="EnsemblPlants" id="AT3G44480.1">
    <property type="protein sequence ID" value="AT3G44480.1"/>
    <property type="gene ID" value="AT3G44480"/>
</dbReference>
<dbReference type="EnsemblPlants" id="AT3G44480.4">
    <property type="protein sequence ID" value="AT3G44480.4"/>
    <property type="gene ID" value="AT3G44480"/>
</dbReference>
<dbReference type="GeneID" id="823573"/>
<dbReference type="Gramene" id="AT3G44480.1">
    <property type="protein sequence ID" value="AT3G44480.1"/>
    <property type="gene ID" value="AT3G44480"/>
</dbReference>
<dbReference type="Gramene" id="AT3G44480.4">
    <property type="protein sequence ID" value="AT3G44480.4"/>
    <property type="gene ID" value="AT3G44480"/>
</dbReference>
<dbReference type="KEGG" id="ath:AT3G44480"/>
<dbReference type="Araport" id="AT3G44480"/>
<dbReference type="TAIR" id="AT3G44480">
    <property type="gene designation" value="RPP1"/>
</dbReference>
<dbReference type="eggNOG" id="ENOG502SUNR">
    <property type="taxonomic scope" value="Eukaryota"/>
</dbReference>
<dbReference type="HOGENOM" id="CLU_001561_0_1_1"/>
<dbReference type="InParanoid" id="F4J339"/>
<dbReference type="PRO" id="PR:F4J339"/>
<dbReference type="Proteomes" id="UP000006548">
    <property type="component" value="Chromosome 3"/>
</dbReference>
<dbReference type="ExpressionAtlas" id="F4J339">
    <property type="expression patterns" value="baseline and differential"/>
</dbReference>
<dbReference type="GO" id="GO:0005789">
    <property type="term" value="C:endoplasmic reticulum membrane"/>
    <property type="evidence" value="ECO:0000314"/>
    <property type="project" value="TAIR"/>
</dbReference>
<dbReference type="GO" id="GO:0000139">
    <property type="term" value="C:Golgi membrane"/>
    <property type="evidence" value="ECO:0000314"/>
    <property type="project" value="TAIR"/>
</dbReference>
<dbReference type="GO" id="GO:0005886">
    <property type="term" value="C:plasma membrane"/>
    <property type="evidence" value="ECO:0000314"/>
    <property type="project" value="TAIR"/>
</dbReference>
<dbReference type="GO" id="GO:0043531">
    <property type="term" value="F:ADP binding"/>
    <property type="evidence" value="ECO:0007669"/>
    <property type="project" value="InterPro"/>
</dbReference>
<dbReference type="GO" id="GO:0005524">
    <property type="term" value="F:ATP binding"/>
    <property type="evidence" value="ECO:0007669"/>
    <property type="project" value="UniProtKB-KW"/>
</dbReference>
<dbReference type="GO" id="GO:0140376">
    <property type="term" value="F:innate immune receptor activity"/>
    <property type="evidence" value="ECO:0000269"/>
    <property type="project" value="PHI-base"/>
</dbReference>
<dbReference type="GO" id="GO:0030275">
    <property type="term" value="F:LRR domain binding"/>
    <property type="evidence" value="ECO:0000250"/>
    <property type="project" value="TAIR"/>
</dbReference>
<dbReference type="GO" id="GO:0061809">
    <property type="term" value="F:NAD+ nucleosidase activity, cyclic ADP-ribose generating"/>
    <property type="evidence" value="ECO:0007669"/>
    <property type="project" value="UniProtKB-EC"/>
</dbReference>
<dbReference type="GO" id="GO:0006952">
    <property type="term" value="P:defense response"/>
    <property type="evidence" value="ECO:0000304"/>
    <property type="project" value="TAIR"/>
</dbReference>
<dbReference type="GO" id="GO:0050832">
    <property type="term" value="P:defense response to fungus"/>
    <property type="evidence" value="ECO:0000315"/>
    <property type="project" value="TAIR"/>
</dbReference>
<dbReference type="GO" id="GO:0002758">
    <property type="term" value="P:innate immune response-activating signaling pathway"/>
    <property type="evidence" value="ECO:0000315"/>
    <property type="project" value="PHI-base"/>
</dbReference>
<dbReference type="GO" id="GO:0034052">
    <property type="term" value="P:positive regulation of plant-type hypersensitive response"/>
    <property type="evidence" value="ECO:0000315"/>
    <property type="project" value="PHI-base"/>
</dbReference>
<dbReference type="GO" id="GO:0002239">
    <property type="term" value="P:response to oomycetes"/>
    <property type="evidence" value="ECO:0000314"/>
    <property type="project" value="TAIR"/>
</dbReference>
<dbReference type="CDD" id="cd01127">
    <property type="entry name" value="TrwB_TraG_TraD_VirD4"/>
    <property type="match status" value="1"/>
</dbReference>
<dbReference type="FunFam" id="1.10.8.430:FF:000002">
    <property type="entry name" value="Disease resistance protein (TIR-NBS-LRR class)"/>
    <property type="match status" value="1"/>
</dbReference>
<dbReference type="FunFam" id="3.40.50.10140:FF:000007">
    <property type="entry name" value="Disease resistance protein (TIR-NBS-LRR class)"/>
    <property type="match status" value="1"/>
</dbReference>
<dbReference type="FunFam" id="3.40.50.300:FF:001002">
    <property type="entry name" value="Disease resistance protein (TIR-NBS-LRR class)"/>
    <property type="match status" value="1"/>
</dbReference>
<dbReference type="FunFam" id="3.80.10.10:FF:000701">
    <property type="entry name" value="Disease resistance protein (TIR-NBS-LRR class)"/>
    <property type="match status" value="1"/>
</dbReference>
<dbReference type="FunFam" id="3.80.10.10:FF:000845">
    <property type="entry name" value="Disease resistance protein (TIR-NBS-LRR class)"/>
    <property type="match status" value="1"/>
</dbReference>
<dbReference type="FunFam" id="3.80.10.10:FF:001477">
    <property type="entry name" value="Disease resistance protein (TIR-NBS-LRR class) family"/>
    <property type="match status" value="1"/>
</dbReference>
<dbReference type="Gene3D" id="1.10.8.430">
    <property type="entry name" value="Helical domain of apoptotic protease-activating factors"/>
    <property type="match status" value="1"/>
</dbReference>
<dbReference type="Gene3D" id="3.40.50.300">
    <property type="entry name" value="P-loop containing nucleotide triphosphate hydrolases"/>
    <property type="match status" value="1"/>
</dbReference>
<dbReference type="Gene3D" id="3.80.10.10">
    <property type="entry name" value="Ribonuclease Inhibitor"/>
    <property type="match status" value="3"/>
</dbReference>
<dbReference type="Gene3D" id="3.40.50.10140">
    <property type="entry name" value="Toll/interleukin-1 receptor homology (TIR) domain"/>
    <property type="match status" value="1"/>
</dbReference>
<dbReference type="InterPro" id="IPR042197">
    <property type="entry name" value="Apaf_helical"/>
</dbReference>
<dbReference type="InterPro" id="IPR045344">
    <property type="entry name" value="C-JID"/>
</dbReference>
<dbReference type="InterPro" id="IPR044974">
    <property type="entry name" value="Disease_R_plants"/>
</dbReference>
<dbReference type="InterPro" id="IPR011713">
    <property type="entry name" value="Leu-rich_rpt_3"/>
</dbReference>
<dbReference type="InterPro" id="IPR032675">
    <property type="entry name" value="LRR_dom_sf"/>
</dbReference>
<dbReference type="InterPro" id="IPR055414">
    <property type="entry name" value="LRR_R13L4/SHOC2-like"/>
</dbReference>
<dbReference type="InterPro" id="IPR002182">
    <property type="entry name" value="NB-ARC"/>
</dbReference>
<dbReference type="InterPro" id="IPR027417">
    <property type="entry name" value="P-loop_NTPase"/>
</dbReference>
<dbReference type="InterPro" id="IPR000157">
    <property type="entry name" value="TIR_dom"/>
</dbReference>
<dbReference type="InterPro" id="IPR035897">
    <property type="entry name" value="Toll_tir_struct_dom_sf"/>
</dbReference>
<dbReference type="InterPro" id="IPR036390">
    <property type="entry name" value="WH_DNA-bd_sf"/>
</dbReference>
<dbReference type="PANTHER" id="PTHR11017:SF411">
    <property type="entry name" value="ADP-RIBOSYL CYCLASE_CYCLIC ADP-RIBOSE HYDROLASE-RELATED"/>
    <property type="match status" value="1"/>
</dbReference>
<dbReference type="PANTHER" id="PTHR11017">
    <property type="entry name" value="LEUCINE-RICH REPEAT-CONTAINING PROTEIN"/>
    <property type="match status" value="1"/>
</dbReference>
<dbReference type="Pfam" id="PF20160">
    <property type="entry name" value="C-JID"/>
    <property type="match status" value="1"/>
</dbReference>
<dbReference type="Pfam" id="PF23598">
    <property type="entry name" value="LRR_14"/>
    <property type="match status" value="1"/>
</dbReference>
<dbReference type="Pfam" id="PF07725">
    <property type="entry name" value="LRR_3"/>
    <property type="match status" value="1"/>
</dbReference>
<dbReference type="Pfam" id="PF00931">
    <property type="entry name" value="NB-ARC"/>
    <property type="match status" value="1"/>
</dbReference>
<dbReference type="Pfam" id="PF01582">
    <property type="entry name" value="TIR"/>
    <property type="match status" value="1"/>
</dbReference>
<dbReference type="Pfam" id="PF23282">
    <property type="entry name" value="WHD_ROQ1"/>
    <property type="match status" value="1"/>
</dbReference>
<dbReference type="PRINTS" id="PR00364">
    <property type="entry name" value="DISEASERSIST"/>
</dbReference>
<dbReference type="SMART" id="SM00255">
    <property type="entry name" value="TIR"/>
    <property type="match status" value="1"/>
</dbReference>
<dbReference type="SUPFAM" id="SSF52058">
    <property type="entry name" value="L domain-like"/>
    <property type="match status" value="1"/>
</dbReference>
<dbReference type="SUPFAM" id="SSF52540">
    <property type="entry name" value="P-loop containing nucleoside triphosphate hydrolases"/>
    <property type="match status" value="1"/>
</dbReference>
<dbReference type="SUPFAM" id="SSF52200">
    <property type="entry name" value="Toll/Interleukin receptor TIR domain"/>
    <property type="match status" value="1"/>
</dbReference>
<dbReference type="SUPFAM" id="SSF46785">
    <property type="entry name" value="Winged helix' DNA-binding domain"/>
    <property type="match status" value="1"/>
</dbReference>
<dbReference type="PROSITE" id="PS50104">
    <property type="entry name" value="TIR"/>
    <property type="match status" value="1"/>
</dbReference>
<reference key="1">
    <citation type="journal article" date="2000" name="Nature">
        <title>Sequence and analysis of chromosome 3 of the plant Arabidopsis thaliana.</title>
        <authorList>
            <person name="Salanoubat M."/>
            <person name="Lemcke K."/>
            <person name="Rieger M."/>
            <person name="Ansorge W."/>
            <person name="Unseld M."/>
            <person name="Fartmann B."/>
            <person name="Valle G."/>
            <person name="Bloecker H."/>
            <person name="Perez-Alonso M."/>
            <person name="Obermaier B."/>
            <person name="Delseny M."/>
            <person name="Boutry M."/>
            <person name="Grivell L.A."/>
            <person name="Mache R."/>
            <person name="Puigdomenech P."/>
            <person name="De Simone V."/>
            <person name="Choisne N."/>
            <person name="Artiguenave F."/>
            <person name="Robert C."/>
            <person name="Brottier P."/>
            <person name="Wincker P."/>
            <person name="Cattolico L."/>
            <person name="Weissenbach J."/>
            <person name="Saurin W."/>
            <person name="Quetier F."/>
            <person name="Schaefer M."/>
            <person name="Mueller-Auer S."/>
            <person name="Gabel C."/>
            <person name="Fuchs M."/>
            <person name="Benes V."/>
            <person name="Wurmbach E."/>
            <person name="Drzonek H."/>
            <person name="Erfle H."/>
            <person name="Jordan N."/>
            <person name="Bangert S."/>
            <person name="Wiedelmann R."/>
            <person name="Kranz H."/>
            <person name="Voss H."/>
            <person name="Holland R."/>
            <person name="Brandt P."/>
            <person name="Nyakatura G."/>
            <person name="Vezzi A."/>
            <person name="D'Angelo M."/>
            <person name="Pallavicini A."/>
            <person name="Toppo S."/>
            <person name="Simionati B."/>
            <person name="Conrad A."/>
            <person name="Hornischer K."/>
            <person name="Kauer G."/>
            <person name="Loehnert T.-H."/>
            <person name="Nordsiek G."/>
            <person name="Reichelt J."/>
            <person name="Scharfe M."/>
            <person name="Schoen O."/>
            <person name="Bargues M."/>
            <person name="Terol J."/>
            <person name="Climent J."/>
            <person name="Navarro P."/>
            <person name="Collado C."/>
            <person name="Perez-Perez A."/>
            <person name="Ottenwaelder B."/>
            <person name="Duchemin D."/>
            <person name="Cooke R."/>
            <person name="Laudie M."/>
            <person name="Berger-Llauro C."/>
            <person name="Purnelle B."/>
            <person name="Masuy D."/>
            <person name="de Haan M."/>
            <person name="Maarse A.C."/>
            <person name="Alcaraz J.-P."/>
            <person name="Cottet A."/>
            <person name="Casacuberta E."/>
            <person name="Monfort A."/>
            <person name="Argiriou A."/>
            <person name="Flores M."/>
            <person name="Liguori R."/>
            <person name="Vitale D."/>
            <person name="Mannhaupt G."/>
            <person name="Haase D."/>
            <person name="Schoof H."/>
            <person name="Rudd S."/>
            <person name="Zaccaria P."/>
            <person name="Mewes H.-W."/>
            <person name="Mayer K.F.X."/>
            <person name="Kaul S."/>
            <person name="Town C.D."/>
            <person name="Koo H.L."/>
            <person name="Tallon L.J."/>
            <person name="Jenkins J."/>
            <person name="Rooney T."/>
            <person name="Rizzo M."/>
            <person name="Walts A."/>
            <person name="Utterback T."/>
            <person name="Fujii C.Y."/>
            <person name="Shea T.P."/>
            <person name="Creasy T.H."/>
            <person name="Haas B."/>
            <person name="Maiti R."/>
            <person name="Wu D."/>
            <person name="Peterson J."/>
            <person name="Van Aken S."/>
            <person name="Pai G."/>
            <person name="Militscher J."/>
            <person name="Sellers P."/>
            <person name="Gill J.E."/>
            <person name="Feldblyum T.V."/>
            <person name="Preuss D."/>
            <person name="Lin X."/>
            <person name="Nierman W.C."/>
            <person name="Salzberg S.L."/>
            <person name="White O."/>
            <person name="Venter J.C."/>
            <person name="Fraser C.M."/>
            <person name="Kaneko T."/>
            <person name="Nakamura Y."/>
            <person name="Sato S."/>
            <person name="Kato T."/>
            <person name="Asamizu E."/>
            <person name="Sasamoto S."/>
            <person name="Kimura T."/>
            <person name="Idesawa K."/>
            <person name="Kawashima K."/>
            <person name="Kishida Y."/>
            <person name="Kiyokawa C."/>
            <person name="Kohara M."/>
            <person name="Matsumoto M."/>
            <person name="Matsuno A."/>
            <person name="Muraki A."/>
            <person name="Nakayama S."/>
            <person name="Nakazaki N."/>
            <person name="Shinpo S."/>
            <person name="Takeuchi C."/>
            <person name="Wada T."/>
            <person name="Watanabe A."/>
            <person name="Yamada M."/>
            <person name="Yasuda M."/>
            <person name="Tabata S."/>
        </authorList>
    </citation>
    <scope>NUCLEOTIDE SEQUENCE [LARGE SCALE GENOMIC DNA]</scope>
    <source>
        <strain>cv. Columbia</strain>
    </source>
</reference>
<reference key="2">
    <citation type="journal article" date="2017" name="Plant J.">
        <title>Araport11: a complete reannotation of the Arabidopsis thaliana reference genome.</title>
        <authorList>
            <person name="Cheng C.Y."/>
            <person name="Krishnakumar V."/>
            <person name="Chan A.P."/>
            <person name="Thibaud-Nissen F."/>
            <person name="Schobel S."/>
            <person name="Town C.D."/>
        </authorList>
    </citation>
    <scope>GENOME REANNOTATION</scope>
    <source>
        <strain>cv. Columbia</strain>
    </source>
</reference>
<reference key="3">
    <citation type="journal article" date="2010" name="Mol. Plant Microbe Interact.">
        <title>The Arabidopsis downy mildew resistance gene RPP8 is induced by pathogens and salicylic acid and is regulated by W box cis elements.</title>
        <authorList>
            <person name="Mohr T.J."/>
            <person name="Mammarella N.D."/>
            <person name="Hoff T."/>
            <person name="Woffenden B.J."/>
            <person name="Jelesko J.G."/>
            <person name="McDowell J.M."/>
        </authorList>
    </citation>
    <scope>INDUCTION</scope>
</reference>
<reference key="4">
    <citation type="journal article" date="2019" name="Science">
        <title>NAD+ cleavage activity by animal and plant TIR domains in cell death pathways.</title>
        <authorList>
            <person name="Horsefield S."/>
            <person name="Burdett H."/>
            <person name="Zhang X."/>
            <person name="Manik M.K."/>
            <person name="Shi Y."/>
            <person name="Chen J."/>
            <person name="Qi T."/>
            <person name="Gilley J."/>
            <person name="Lai J.S."/>
            <person name="Rank M.X."/>
            <person name="Casey L.W."/>
            <person name="Gu W."/>
            <person name="Ericsson D.J."/>
            <person name="Foley G."/>
            <person name="Hughes R.O."/>
            <person name="Bosanac T."/>
            <person name="von Itzstein M."/>
            <person name="Rathjen J.P."/>
            <person name="Nanson J.D."/>
            <person name="Boden M."/>
            <person name="Dry I.B."/>
            <person name="Williams S.J."/>
            <person name="Staskawicz B.J."/>
            <person name="Coleman M.P."/>
            <person name="Ve T."/>
            <person name="Dodds P.N."/>
            <person name="Kobe B."/>
        </authorList>
    </citation>
    <scope>FUNCTION</scope>
    <scope>CATALYTIC ACTIVITY</scope>
</reference>
<reference key="5">
    <citation type="journal article" date="2019" name="Science">
        <title>TIR domains of plant immune receptors are NAD+-cleaving enzymes that promote cell death.</title>
        <authorList>
            <person name="Wan L."/>
            <person name="Essuman K."/>
            <person name="Anderson R.G."/>
            <person name="Sasaki Y."/>
            <person name="Monteiro F."/>
            <person name="Chung E.H."/>
            <person name="Osborne Nishimura E."/>
            <person name="DiAntonio A."/>
            <person name="Milbrandt J."/>
            <person name="Dangl J.L."/>
            <person name="Nishimura M.T."/>
        </authorList>
    </citation>
    <scope>FUNCTION</scope>
    <scope>CATALYTIC ACTIVITY</scope>
</reference>
<comment type="function">
    <text evidence="1 7 8">TIR-NB-LRR receptor-like protein that confers resistance to the pathogen Hyaloperonospora arabidopsis (By similarity). Probably acts as a NAD(+) hydrolase (NADase): in response to activation, catalyzes cleavage of NAD(+) into ADP-D-ribose (ADPR) and nicotinamide; NAD(+) cleavage triggering a defense system that promotes cell death (PubMed:31439792, PubMed:31439793).</text>
</comment>
<comment type="catalytic activity">
    <reaction evidence="10 11">
        <text>NAD(+) + H2O = ADP-D-ribose + nicotinamide + H(+)</text>
        <dbReference type="Rhea" id="RHEA:16301"/>
        <dbReference type="ChEBI" id="CHEBI:15377"/>
        <dbReference type="ChEBI" id="CHEBI:15378"/>
        <dbReference type="ChEBI" id="CHEBI:17154"/>
        <dbReference type="ChEBI" id="CHEBI:57540"/>
        <dbReference type="ChEBI" id="CHEBI:57967"/>
        <dbReference type="EC" id="3.2.2.6"/>
    </reaction>
    <physiologicalReaction direction="left-to-right" evidence="10 11">
        <dbReference type="Rhea" id="RHEA:16302"/>
    </physiologicalReaction>
</comment>
<comment type="induction">
    <text evidence="6">By infection with Hyaloperonospora arabidopsidis isolate Emco5.</text>
</comment>
<comment type="domain">
    <text evidence="4">The TIR domain mediates NAD(+) hydrolase (NADase) activity. Self-association of TIR domains is required for NADase activity.</text>
</comment>
<comment type="similarity">
    <text evidence="9">Belongs to the disease resistance TIR-NB-LRR family.</text>
</comment>
<comment type="sequence caution" evidence="9">
    <conflict type="erroneous gene model prediction">
        <sequence resource="EMBL-CDS" id="CAB88530"/>
    </conflict>
</comment>
<protein>
    <recommendedName>
        <fullName evidence="9">Probable disease resistance protein RPP1</fullName>
    </recommendedName>
    <alternativeName>
        <fullName>Probable NAD(+) hydrolase RPP1</fullName>
        <ecNumber evidence="10 11">3.2.2.6</ecNumber>
    </alternativeName>
    <alternativeName>
        <fullName evidence="9">Protein RECOGNITION OF PERONOSPORA PARASITICA 1</fullName>
    </alternativeName>
</protein>
<gene>
    <name evidence="9" type="primary">RPP1</name>
    <name evidence="12" type="ordered locus">At3g44480</name>
    <name evidence="13" type="ORF">F14L2_30</name>
</gene>
<organism>
    <name type="scientific">Arabidopsis thaliana</name>
    <name type="common">Mouse-ear cress</name>
    <dbReference type="NCBI Taxonomy" id="3702"/>
    <lineage>
        <taxon>Eukaryota</taxon>
        <taxon>Viridiplantae</taxon>
        <taxon>Streptophyta</taxon>
        <taxon>Embryophyta</taxon>
        <taxon>Tracheophyta</taxon>
        <taxon>Spermatophyta</taxon>
        <taxon>Magnoliopsida</taxon>
        <taxon>eudicotyledons</taxon>
        <taxon>Gunneridae</taxon>
        <taxon>Pentapetalae</taxon>
        <taxon>rosids</taxon>
        <taxon>malvids</taxon>
        <taxon>Brassicales</taxon>
        <taxon>Brassicaceae</taxon>
        <taxon>Camelineae</taxon>
        <taxon>Arabidopsis</taxon>
    </lineage>
</organism>
<sequence length="1194" mass="136132">MGSVMSLGCSKRKATNQDVDSESRKRRKICSTNDAENCRFIQDESSWKHPWSLCANRVISVAAVALTNFRFQQDNQESNSSSLSLPSPATSVSRNWKHDVFPSFHGADVRRTFLSHIMESFRRKGIDTFIDNNIERSKSIGPELKEAIKGSKIAIVLLSRKYASSSWCLDELAEIMKCRQMVGQIVMTIFYEVDPTDIKKQTGEFGKAFTKTCRGKPKEQVERWRKALEDVATIAGYHSHSWRNEADMIEKISTDVSNMLNSFTPSRDFDGLVGMRAHMDMLEQLLRLDLDEVRMIGIWGPPGIGKTTIARFLFNQVSDRFQLSAIMVNIKGCYPRPCFDEYSAQLQLQNQMLSQMINHKDIMISHLGVAQERLRDKKVFLVLDEVDQLGQLDALAKETRWFGPGSRIIITTEDLGVLKAHGINHVYKVEYPSNDEAFQIFCMNAFGQKQPHEGFDEIAWEVTCLAGELPLGLKVLGSALRGKSKREWERTLPRLKTSLDGKIGSIIQFSYDVLCDEDKYLFLYIACLFNGESTTKVKELLGKFLDVKQGLHLLAQKSLISFDGERIHMHTLLEQFGRETSRKQFVHHGFTKRQLLVGARGICEVLDDDTTDSRRFIGIHLELSNTEEELNISEKVLERVHDFHFVRIDASFQPERLQLALQDLIYHSPKIRSLNWYGYESLCLPSTFNPEFLVELDMRSSNLRKLWEGTKQLRNLKWMDLSYSSYLKELPNLSTATNLEELKLRNCSSLVELPSSIEKLTSLQILDLENCSSLEKLPAIENATKLRELKLQNCSSLIELPLSIGTATNLKQLNISGCSSLVKLPSSIGDITDLEVFDLSNCSSLVTLPSSIGNLQNLCKLIMRGCSKLEALPININLKSLDTLNLTDCSQLKSFPEISTHISELRLKGTAIKEVPLSIMSWSPLADFQISYFESLMEFPHAFDIITKLHLSKDIQEVPPWVKRMSRLRDLSLNNCNNLVSLPQLSDSLDYIYADNCKSLERLDCCFNNPEIRLYFPKCFKLNQEARDLIMHTCIDAMFPGTQVPACFIHRATSGDSLKIKLKESPLPTTLRFKACIMLVKVNEELMSYDQTPMIVDIVIRDEHNDLKEKIYPSIYPSIYPLLTEHIYTFELDVEEVTSTELVFEFPQLNKRNWKIGECGILQRETRSLRRSSSPDLSPESSRVSSYDHCLRGD</sequence>